<gene>
    <name evidence="5" type="primary">CM1</name>
    <name evidence="8" type="ordered locus">At3g29200</name>
    <name evidence="9" type="ORF">MXO21.4</name>
</gene>
<proteinExistence type="evidence at protein level"/>
<feature type="transit peptide" description="Chloroplast" evidence="12">
    <location>
        <begin position="1"/>
        <end position="65"/>
    </location>
</feature>
<feature type="chain" id="PRO_0000023926" description="Chorismate mutase 1, chloroplastic">
    <location>
        <begin position="66"/>
        <end position="340"/>
    </location>
</feature>
<feature type="domain" description="Chorismate mutase" evidence="1">
    <location>
        <begin position="79"/>
        <end position="340"/>
    </location>
</feature>
<feature type="binding site" evidence="3 11">
    <location>
        <position position="79"/>
    </location>
    <ligand>
        <name>L-phenylalanine</name>
        <dbReference type="ChEBI" id="CHEBI:58095"/>
        <note>allosteric inhibitor</note>
    </ligand>
</feature>
<feature type="binding site" evidence="3 10">
    <location>
        <position position="150"/>
    </location>
    <ligand>
        <name>L-tyrosine</name>
        <dbReference type="ChEBI" id="CHEBI:58315"/>
        <note>allosteric inhibitor</note>
    </ligand>
</feature>
<feature type="binding site" evidence="3 11">
    <location>
        <begin position="211"/>
        <end position="214"/>
    </location>
    <ligand>
        <name>L-phenylalanine</name>
        <dbReference type="ChEBI" id="CHEBI:58095"/>
        <note>allosteric inhibitor</note>
    </ligand>
</feature>
<feature type="binding site" evidence="3 10">
    <location>
        <begin position="211"/>
        <end position="214"/>
    </location>
    <ligand>
        <name>L-tyrosine</name>
        <dbReference type="ChEBI" id="CHEBI:58315"/>
        <note>allosteric inhibitor</note>
    </ligand>
</feature>
<feature type="site" description="Controls amino acid effector specificity" evidence="3">
    <location>
        <position position="149"/>
    </location>
</feature>
<feature type="modified residue" description="N-acetylalanine" evidence="12">
    <location>
        <position position="66"/>
    </location>
</feature>
<feature type="mutagenesis site" description="Enhanced activity with slightly reduced allosteric inhibition by tyrosine and phenylalanine, but normal activation by tryptophan." evidence="3">
    <original>R</original>
    <variation>K</variation>
    <location>
        <position position="79"/>
    </location>
</feature>
<feature type="mutagenesis site" description="Strongly reduced activity, but almost normal allosteric regulation by tyrosine, phenylalanine and tryptophan." evidence="3">
    <original>H</original>
    <variation>Q</variation>
    <location>
        <position position="145"/>
    </location>
</feature>
<feature type="mutagenesis site" description="Increased activation by tryptophan but abolished allosteric repression by tyrosine and phenylalanine." evidence="3">
    <original>G</original>
    <variation>D</variation>
    <variation>A</variation>
    <location>
        <position position="149"/>
    </location>
</feature>
<feature type="mutagenesis site" description="Normal activity and abolished allosteric regulation by tyrosine, phenylalanine and tryptophan." evidence="3">
    <original>G</original>
    <variation>P</variation>
    <variation>A</variation>
    <location>
        <position position="213"/>
    </location>
</feature>
<feature type="mutagenesis site" description="Enhanced activity, but strong allosteric inhibition by tyrosine and phenylalanine, and normal activation by tryptophan." evidence="3">
    <original>V</original>
    <variation>T</variation>
    <location>
        <position position="217"/>
    </location>
</feature>
<feature type="sequence conflict" description="In Ref. 1; CAA81286." evidence="6" ref="1">
    <original>A</original>
    <variation>R</variation>
    <location>
        <position position="259"/>
    </location>
</feature>
<feature type="helix" evidence="13">
    <location>
        <begin position="88"/>
        <end position="90"/>
    </location>
</feature>
<feature type="helix" evidence="13">
    <location>
        <begin position="91"/>
        <end position="109"/>
    </location>
</feature>
<feature type="helix" evidence="13">
    <location>
        <begin position="116"/>
        <end position="119"/>
    </location>
</feature>
<feature type="helix" evidence="13">
    <location>
        <begin position="133"/>
        <end position="146"/>
    </location>
</feature>
<feature type="turn" evidence="13">
    <location>
        <begin position="147"/>
        <end position="149"/>
    </location>
</feature>
<feature type="helix" evidence="13">
    <location>
        <begin position="150"/>
        <end position="152"/>
    </location>
</feature>
<feature type="helix" evidence="13">
    <location>
        <begin position="161"/>
        <end position="163"/>
    </location>
</feature>
<feature type="helix" evidence="13">
    <location>
        <begin position="180"/>
        <end position="184"/>
    </location>
</feature>
<feature type="helix" evidence="13">
    <location>
        <begin position="188"/>
        <end position="197"/>
    </location>
</feature>
<feature type="helix" evidence="13">
    <location>
        <begin position="200"/>
        <end position="203"/>
    </location>
</feature>
<feature type="helix" evidence="13">
    <location>
        <begin position="212"/>
        <end position="231"/>
    </location>
</feature>
<feature type="helix" evidence="13">
    <location>
        <begin position="233"/>
        <end position="243"/>
    </location>
</feature>
<feature type="helix" evidence="13">
    <location>
        <begin position="245"/>
        <end position="253"/>
    </location>
</feature>
<feature type="helix" evidence="13">
    <location>
        <begin position="257"/>
        <end position="263"/>
    </location>
</feature>
<feature type="helix" evidence="13">
    <location>
        <begin position="267"/>
        <end position="284"/>
    </location>
</feature>
<feature type="strand" evidence="13">
    <location>
        <begin position="308"/>
        <end position="310"/>
    </location>
</feature>
<feature type="helix" evidence="13">
    <location>
        <begin position="312"/>
        <end position="322"/>
    </location>
</feature>
<feature type="helix" evidence="13">
    <location>
        <begin position="324"/>
        <end position="336"/>
    </location>
</feature>
<feature type="turn" evidence="13">
    <location>
        <begin position="337"/>
        <end position="339"/>
    </location>
</feature>
<organism>
    <name type="scientific">Arabidopsis thaliana</name>
    <name type="common">Mouse-ear cress</name>
    <dbReference type="NCBI Taxonomy" id="3702"/>
    <lineage>
        <taxon>Eukaryota</taxon>
        <taxon>Viridiplantae</taxon>
        <taxon>Streptophyta</taxon>
        <taxon>Embryophyta</taxon>
        <taxon>Tracheophyta</taxon>
        <taxon>Spermatophyta</taxon>
        <taxon>Magnoliopsida</taxon>
        <taxon>eudicotyledons</taxon>
        <taxon>Gunneridae</taxon>
        <taxon>Pentapetalae</taxon>
        <taxon>rosids</taxon>
        <taxon>malvids</taxon>
        <taxon>Brassicales</taxon>
        <taxon>Brassicaceae</taxon>
        <taxon>Camelineae</taxon>
        <taxon>Arabidopsis</taxon>
    </lineage>
</organism>
<dbReference type="EC" id="5.4.99.5" evidence="2 3 4"/>
<dbReference type="EMBL" id="AJ242647">
    <property type="protein sequence ID" value="CAB54518.1"/>
    <property type="status" value="ALT_INIT"/>
    <property type="molecule type" value="Genomic_DNA"/>
</dbReference>
<dbReference type="EMBL" id="AB026657">
    <property type="protein sequence ID" value="BAB01816.1"/>
    <property type="status" value="ALT_INIT"/>
    <property type="molecule type" value="Genomic_DNA"/>
</dbReference>
<dbReference type="EMBL" id="CP002686">
    <property type="protein sequence ID" value="AEE77552.1"/>
    <property type="molecule type" value="Genomic_DNA"/>
</dbReference>
<dbReference type="EMBL" id="BT024732">
    <property type="protein sequence ID" value="ABD59070.1"/>
    <property type="molecule type" value="mRNA"/>
</dbReference>
<dbReference type="EMBL" id="Z26519">
    <property type="protein sequence ID" value="CAA81286.1"/>
    <property type="status" value="ALT_INIT"/>
    <property type="molecule type" value="mRNA"/>
</dbReference>
<dbReference type="PIR" id="S38958">
    <property type="entry name" value="S38958"/>
</dbReference>
<dbReference type="RefSeq" id="NP_566846.1">
    <property type="nucleotide sequence ID" value="NM_113844.4"/>
</dbReference>
<dbReference type="PDB" id="4PPU">
    <property type="method" value="X-ray"/>
    <property type="resolution" value="2.30 A"/>
    <property type="chains" value="A=65-340"/>
</dbReference>
<dbReference type="PDB" id="4PPV">
    <property type="method" value="X-ray"/>
    <property type="resolution" value="2.45 A"/>
    <property type="chains" value="A=65-340"/>
</dbReference>
<dbReference type="PDBsum" id="4PPU"/>
<dbReference type="PDBsum" id="4PPV"/>
<dbReference type="SMR" id="P42738"/>
<dbReference type="FunCoup" id="P42738">
    <property type="interactions" value="512"/>
</dbReference>
<dbReference type="STRING" id="3702.P42738"/>
<dbReference type="iPTMnet" id="P42738"/>
<dbReference type="PaxDb" id="3702-AT3G29200.1"/>
<dbReference type="ProteomicsDB" id="240896"/>
<dbReference type="EnsemblPlants" id="AT3G29200.1">
    <property type="protein sequence ID" value="AT3G29200.1"/>
    <property type="gene ID" value="AT3G29200"/>
</dbReference>
<dbReference type="GeneID" id="822573"/>
<dbReference type="Gramene" id="AT3G29200.1">
    <property type="protein sequence ID" value="AT3G29200.1"/>
    <property type="gene ID" value="AT3G29200"/>
</dbReference>
<dbReference type="KEGG" id="ath:AT3G29200"/>
<dbReference type="Araport" id="AT3G29200"/>
<dbReference type="TAIR" id="AT3G29200">
    <property type="gene designation" value="CM1"/>
</dbReference>
<dbReference type="eggNOG" id="KOG0795">
    <property type="taxonomic scope" value="Eukaryota"/>
</dbReference>
<dbReference type="HOGENOM" id="CLU_057757_0_0_1"/>
<dbReference type="InParanoid" id="P42738"/>
<dbReference type="OMA" id="ATCDVNC"/>
<dbReference type="BioCyc" id="ARA:AT3G29200-MONOMER"/>
<dbReference type="BioCyc" id="MetaCyc:AT3G29200-MONOMER"/>
<dbReference type="BRENDA" id="5.4.99.5">
    <property type="organism ID" value="399"/>
</dbReference>
<dbReference type="SABIO-RK" id="P42738"/>
<dbReference type="UniPathway" id="UPA00120">
    <property type="reaction ID" value="UER00203"/>
</dbReference>
<dbReference type="EvolutionaryTrace" id="P42738"/>
<dbReference type="PRO" id="PR:P42738"/>
<dbReference type="Proteomes" id="UP000006548">
    <property type="component" value="Chromosome 3"/>
</dbReference>
<dbReference type="ExpressionAtlas" id="P42738">
    <property type="expression patterns" value="baseline and differential"/>
</dbReference>
<dbReference type="GO" id="GO:0009507">
    <property type="term" value="C:chloroplast"/>
    <property type="evidence" value="ECO:0007669"/>
    <property type="project" value="UniProtKB-SubCell"/>
</dbReference>
<dbReference type="GO" id="GO:0005829">
    <property type="term" value="C:cytosol"/>
    <property type="evidence" value="ECO:0000304"/>
    <property type="project" value="TAIR"/>
</dbReference>
<dbReference type="GO" id="GO:0004106">
    <property type="term" value="F:chorismate mutase activity"/>
    <property type="evidence" value="ECO:0000314"/>
    <property type="project" value="UniProtKB"/>
</dbReference>
<dbReference type="GO" id="GO:0016688">
    <property type="term" value="F:L-ascorbate peroxidase activity"/>
    <property type="evidence" value="ECO:0000250"/>
    <property type="project" value="TAIR"/>
</dbReference>
<dbReference type="GO" id="GO:0042803">
    <property type="term" value="F:protein homodimerization activity"/>
    <property type="evidence" value="ECO:0000314"/>
    <property type="project" value="UniProtKB"/>
</dbReference>
<dbReference type="GO" id="GO:0008652">
    <property type="term" value="P:amino acid biosynthetic process"/>
    <property type="evidence" value="ECO:0007669"/>
    <property type="project" value="UniProtKB-KW"/>
</dbReference>
<dbReference type="GO" id="GO:0009073">
    <property type="term" value="P:aromatic amino acid family biosynthetic process"/>
    <property type="evidence" value="ECO:0000314"/>
    <property type="project" value="UniProtKB"/>
</dbReference>
<dbReference type="GO" id="GO:0046417">
    <property type="term" value="P:chorismate metabolic process"/>
    <property type="evidence" value="ECO:0007669"/>
    <property type="project" value="InterPro"/>
</dbReference>
<dbReference type="GO" id="GO:1901747">
    <property type="term" value="P:prephenate(2-) biosynthetic process"/>
    <property type="evidence" value="ECO:0000314"/>
    <property type="project" value="UniProtKB"/>
</dbReference>
<dbReference type="FunFam" id="1.10.590.10:FF:000001">
    <property type="entry name" value="Chorismate mutase"/>
    <property type="match status" value="1"/>
</dbReference>
<dbReference type="Gene3D" id="1.10.590.10">
    <property type="entry name" value="Chorismate mutase, AroQ class superfamily, eukaryotic"/>
    <property type="match status" value="1"/>
</dbReference>
<dbReference type="InterPro" id="IPR036263">
    <property type="entry name" value="Chorismate_II_sf"/>
</dbReference>
<dbReference type="InterPro" id="IPR008238">
    <property type="entry name" value="Chorismate_mutase_AroQ_euk"/>
</dbReference>
<dbReference type="InterPro" id="IPR037039">
    <property type="entry name" value="CM_AroQ_sf_eucaryotic"/>
</dbReference>
<dbReference type="InterPro" id="IPR002701">
    <property type="entry name" value="CM_II_prokaryot"/>
</dbReference>
<dbReference type="NCBIfam" id="TIGR01802">
    <property type="entry name" value="CM_pl-yst"/>
    <property type="match status" value="1"/>
</dbReference>
<dbReference type="PANTHER" id="PTHR21145">
    <property type="entry name" value="CHORISMATE MUTASE"/>
    <property type="match status" value="1"/>
</dbReference>
<dbReference type="PANTHER" id="PTHR21145:SF0">
    <property type="entry name" value="CHORISMATE MUTASE 1, CHLOROPLASTIC"/>
    <property type="match status" value="1"/>
</dbReference>
<dbReference type="Pfam" id="PF01817">
    <property type="entry name" value="CM_2"/>
    <property type="match status" value="1"/>
</dbReference>
<dbReference type="SUPFAM" id="SSF48600">
    <property type="entry name" value="Chorismate mutase II"/>
    <property type="match status" value="1"/>
</dbReference>
<dbReference type="PROSITE" id="PS51169">
    <property type="entry name" value="CHORISMATE_MUT_3"/>
    <property type="match status" value="1"/>
</dbReference>
<name>CM1_ARATH</name>
<comment type="function">
    <text evidence="6">May play a role in chloroplast biogenesis.</text>
</comment>
<comment type="catalytic activity">
    <reaction evidence="2 3 4">
        <text>chorismate = prephenate</text>
        <dbReference type="Rhea" id="RHEA:13897"/>
        <dbReference type="ChEBI" id="CHEBI:29748"/>
        <dbReference type="ChEBI" id="CHEBI:29934"/>
        <dbReference type="EC" id="5.4.99.5"/>
    </reaction>
</comment>
<comment type="activity regulation">
    <text evidence="2 3 4">Allosterically inhibited by tyrosine and phenylalanine. Activated by tryptophan.</text>
</comment>
<comment type="biophysicochemical properties">
    <kinetics>
        <KM evidence="3">550 uM for chorismate (at pH 8)</KM>
        <KM evidence="2">2.9 mM for chorismate</KM>
        <Vmax evidence="3">29.0 umol/min/mg enzyme with chorismate as substrate (apoenzyme at pH 8)</Vmax>
        <Vmax evidence="3">55.0 umol/min/mg enzyme with chorismate as substrate (in the presence of tryptophan at pH 8)</Vmax>
        <Vmax evidence="3">1.4 umol/min/mg enzyme with chorismate as substrate (in the presence of tyrosine at pH 8)</Vmax>
        <Vmax evidence="3">1.2 umol/min/mg enzyme with chorismate as substrate (in the presence of phenylalanine at pH 8)</Vmax>
        <text evidence="3">kcat is 16.1 sec(-1) with chorismate as substrate (at pH 8).</text>
    </kinetics>
</comment>
<comment type="pathway">
    <text evidence="2 4">Metabolic intermediate biosynthesis; prephenate biosynthesis; prephenate from chorismate: step 1/1.</text>
</comment>
<comment type="subunit">
    <text evidence="3">Homodimer.</text>
</comment>
<comment type="subcellular location">
    <subcellularLocation>
        <location evidence="7">Plastid</location>
        <location evidence="7">Chloroplast</location>
    </subcellularLocation>
</comment>
<comment type="tissue specificity">
    <text evidence="2">Expressed in roots, shoots, rosette leaves, stems, cauline leaves, flowers and siliques.</text>
</comment>
<comment type="induction">
    <text evidence="2 4">By wounding, P.syringae, bacterial elicitor and the fungal pathogens F.oxysporum and A.raphani.</text>
</comment>
<comment type="sequence caution" evidence="6">
    <conflict type="erroneous initiation">
        <sequence resource="EMBL-CDS" id="BAB01816"/>
    </conflict>
    <text>Truncated N-terminus.</text>
</comment>
<comment type="sequence caution" evidence="6">
    <conflict type="erroneous initiation">
        <sequence resource="EMBL-CDS" id="CAA81286"/>
    </conflict>
    <text>Truncated N-terminus.</text>
</comment>
<comment type="sequence caution" evidence="6">
    <conflict type="erroneous initiation">
        <sequence resource="EMBL-CDS" id="CAB54518"/>
    </conflict>
    <text>Truncated N-terminus.</text>
</comment>
<protein>
    <recommendedName>
        <fullName evidence="5">Chorismate mutase 1, chloroplastic</fullName>
        <shortName evidence="5">AtCM1</shortName>
        <ecNumber evidence="2 3 4">5.4.99.5</ecNumber>
    </recommendedName>
    <alternativeName>
        <fullName evidence="5">CM-1</fullName>
    </alternativeName>
</protein>
<evidence type="ECO:0000255" key="1">
    <source>
        <dbReference type="PROSITE-ProRule" id="PRU00516"/>
    </source>
</evidence>
<evidence type="ECO:0000269" key="2">
    <source>
    </source>
</evidence>
<evidence type="ECO:0000269" key="3">
    <source>
    </source>
</evidence>
<evidence type="ECO:0000269" key="4">
    <source>
    </source>
</evidence>
<evidence type="ECO:0000303" key="5">
    <source ref="1"/>
</evidence>
<evidence type="ECO:0000305" key="6"/>
<evidence type="ECO:0000305" key="7">
    <source>
    </source>
</evidence>
<evidence type="ECO:0000312" key="8">
    <source>
        <dbReference type="Araport" id="AT3G29200"/>
    </source>
</evidence>
<evidence type="ECO:0000312" key="9">
    <source>
        <dbReference type="EMBL" id="BAB01816.1"/>
    </source>
</evidence>
<evidence type="ECO:0007744" key="10">
    <source>
        <dbReference type="PDB" id="4PPU"/>
    </source>
</evidence>
<evidence type="ECO:0007744" key="11">
    <source>
        <dbReference type="PDB" id="4PPV"/>
    </source>
</evidence>
<evidence type="ECO:0007744" key="12">
    <source>
    </source>
</evidence>
<evidence type="ECO:0007829" key="13">
    <source>
        <dbReference type="PDB" id="4PPU"/>
    </source>
</evidence>
<keyword id="KW-0002">3D-structure</keyword>
<keyword id="KW-0007">Acetylation</keyword>
<keyword id="KW-0021">Allosteric enzyme</keyword>
<keyword id="KW-0028">Amino-acid biosynthesis</keyword>
<keyword id="KW-0057">Aromatic amino acid biosynthesis</keyword>
<keyword id="KW-0150">Chloroplast</keyword>
<keyword id="KW-0413">Isomerase</keyword>
<keyword id="KW-0934">Plastid</keyword>
<keyword id="KW-1185">Reference proteome</keyword>
<keyword id="KW-0809">Transit peptide</keyword>
<sequence>MEASLLMRSSCCSSAIGGFFDHRRELSTSTPISTLLPLPSTKSSFSVRCSLPQPSKPRSGTSSVHAVMTLAGSLTGKKRVDESESLTLEGIRNSLIRQEDSIIFGLLERAKYCYNADTYDPTAFDMDGFNGSLVEYMVKGTEKLHAKVGRFKSPDEHPFFPDDLPEPMLPPLQYPKVLHFAADSININKKIWNMYFRDLVPRLVKKGDDGNYGSTAVCDAICLQCLSKRIHYGKFVAEAKFQASPEAYESAIKAQDKDALMDMLTFPTVEDAIKKRVEMKTRTYGQEVKVGMEEKEEEEEEGNESHVYKISPILVGDLYGDWIMPLTKEVQVEYLLRRLD</sequence>
<accession>P42738</accession>
<accession>Q29Q24</accession>
<accession>Q9LS75</accession>
<accession>Q9SUJ5</accession>
<reference key="1">
    <citation type="submission" date="1999-05" db="EMBL/GenBank/DDBJ databases">
        <title>Expression analysis of Arabidopsis thaliana genes for plastidic (CM1) and cytosolic (CM2) chorismate mutases.</title>
        <authorList>
            <person name="Kuhn R."/>
            <person name="Vogt E."/>
            <person name="Schmid J."/>
            <person name="Amrhein N."/>
            <person name="Schaller A."/>
        </authorList>
    </citation>
    <scope>NUCLEOTIDE SEQUENCE [GENOMIC DNA]</scope>
    <source>
        <strain>cv. Landsberg erecta</strain>
    </source>
</reference>
<reference key="2">
    <citation type="journal article" date="2000" name="DNA Res.">
        <title>Structural analysis of Arabidopsis thaliana chromosome 3. I. Sequence features of the regions of 4,504,864 bp covered by sixty P1 and TAC clones.</title>
        <authorList>
            <person name="Sato S."/>
            <person name="Nakamura Y."/>
            <person name="Kaneko T."/>
            <person name="Katoh T."/>
            <person name="Asamizu E."/>
            <person name="Tabata S."/>
        </authorList>
    </citation>
    <scope>NUCLEOTIDE SEQUENCE [LARGE SCALE GENOMIC DNA]</scope>
    <source>
        <strain>cv. Columbia</strain>
    </source>
</reference>
<reference key="3">
    <citation type="journal article" date="2017" name="Plant J.">
        <title>Araport11: a complete reannotation of the Arabidopsis thaliana reference genome.</title>
        <authorList>
            <person name="Cheng C.Y."/>
            <person name="Krishnakumar V."/>
            <person name="Chan A.P."/>
            <person name="Thibaud-Nissen F."/>
            <person name="Schobel S."/>
            <person name="Town C.D."/>
        </authorList>
    </citation>
    <scope>GENOME REANNOTATION</scope>
    <source>
        <strain>cv. Columbia</strain>
    </source>
</reference>
<reference key="4">
    <citation type="submission" date="2006-03" db="EMBL/GenBank/DDBJ databases">
        <title>Arabidopsis ORF clones.</title>
        <authorList>
            <person name="Shinn P."/>
            <person name="Chen H."/>
            <person name="Kim C.J."/>
            <person name="Ecker J.R."/>
        </authorList>
    </citation>
    <scope>NUCLEOTIDE SEQUENCE [LARGE SCALE MRNA]</scope>
    <source>
        <strain>cv. Columbia</strain>
    </source>
</reference>
<reference key="5">
    <citation type="journal article" date="1993" name="FEBS Lett.">
        <title>Cloning and expression in yeast of a higher plant chorismate mutase. Molecular cloning, sequencing of the cDNA and characterization of the Arabidopsis thaliana enzyme expressed in yeast.</title>
        <authorList>
            <person name="Eberhard J."/>
            <person name="Raesecke H.-R."/>
            <person name="Schmid J."/>
            <person name="Amrhein N."/>
        </authorList>
    </citation>
    <scope>NUCLEOTIDE SEQUENCE [MRNA] OF 3-340</scope>
</reference>
<reference key="6">
    <citation type="journal article" date="1996" name="Plant J.">
        <title>Cytosolic and plastidic chorismate mutase isozymes from Arabidopsis thaliana: molecular characterization and enzymatic properties.</title>
        <authorList>
            <person name="Eberhard J."/>
            <person name="Ehrler T.T."/>
            <person name="Epple P."/>
            <person name="Felix G."/>
            <person name="Raesecke H.R."/>
            <person name="Amrhein N."/>
            <person name="Schmid J."/>
        </authorList>
    </citation>
    <scope>CATALYTIC ACTIVITY</scope>
    <scope>ACTIVITY REGULATION</scope>
    <scope>INDUCTION</scope>
    <scope>PATHWAY</scope>
</reference>
<reference key="7">
    <citation type="journal article" date="1999" name="Gene">
        <title>Identification, characterization and comparative analysis of a novel chorismate mutase gene in Arabidopsis thaliana.</title>
        <authorList>
            <person name="Mobley E.M."/>
            <person name="Kunkel B.N."/>
            <person name="Keith B."/>
        </authorList>
    </citation>
    <scope>CATALYTIC ACTIVITY</scope>
    <scope>ACTIVITY REGULATION</scope>
    <scope>BIOPHYSICOCHEMICAL PROPERTIES</scope>
    <scope>TISSUE SPECIFICITY</scope>
    <scope>INDUCTION</scope>
    <scope>PATHWAY</scope>
</reference>
<reference key="8">
    <citation type="journal article" date="2012" name="Mol. Cell. Proteomics">
        <title>Comparative large-scale characterisation of plant vs. mammal proteins reveals similar and idiosyncratic N-alpha acetylation features.</title>
        <authorList>
            <person name="Bienvenut W.V."/>
            <person name="Sumpton D."/>
            <person name="Martinez A."/>
            <person name="Lilla S."/>
            <person name="Espagne C."/>
            <person name="Meinnel T."/>
            <person name="Giglione C."/>
        </authorList>
    </citation>
    <scope>ACETYLATION [LARGE SCALE ANALYSIS] AT ALA-66</scope>
    <scope>CLEAVAGE OF TRANSIT PEPTIDE [LARGE SCALE ANALYSIS] AFTER HIS-65</scope>
    <scope>IDENTIFICATION BY MASS SPECTROMETRY [LARGE SCALE ANALYSIS]</scope>
</reference>
<reference evidence="10 11" key="9">
    <citation type="journal article" date="2014" name="J. Biol. Chem.">
        <title>Structural evolution of differential amino acid effector regulation in plant chorismate mutases.</title>
        <authorList>
            <person name="Westfall C.S."/>
            <person name="Xu A."/>
            <person name="Jez J.M."/>
        </authorList>
    </citation>
    <scope>X-RAY CRYSTALLOGRAPHY (2.30 ANGSTROMS) OF 65-340 IN COMPLEXES WITH L-PHENYLALANINE AND L-TYROSINE</scope>
    <scope>HOMODIMERIZATION</scope>
    <scope>ACTIVITY REGULATION</scope>
    <scope>CATALYTIC ACTIVITY</scope>
    <scope>MUTAGENESIS OF ARG-79; HIS-145; GLY-149; GLY-213 AND VAL-217</scope>
    <scope>BIOPHYSICOCHEMICAL PROPERTIES</scope>
</reference>